<organism>
    <name type="scientific">Streptococcus sanguinis (strain SK36)</name>
    <dbReference type="NCBI Taxonomy" id="388919"/>
    <lineage>
        <taxon>Bacteria</taxon>
        <taxon>Bacillati</taxon>
        <taxon>Bacillota</taxon>
        <taxon>Bacilli</taxon>
        <taxon>Lactobacillales</taxon>
        <taxon>Streptococcaceae</taxon>
        <taxon>Streptococcus</taxon>
    </lineage>
</organism>
<keyword id="KW-0067">ATP-binding</keyword>
<keyword id="KW-0963">Cytoplasm</keyword>
<keyword id="KW-0547">Nucleotide-binding</keyword>
<keyword id="KW-1185">Reference proteome</keyword>
<keyword id="KW-0694">RNA-binding</keyword>
<keyword id="KW-0784">Thiamine biosynthesis</keyword>
<keyword id="KW-0808">Transferase</keyword>
<keyword id="KW-0820">tRNA-binding</keyword>
<evidence type="ECO:0000255" key="1">
    <source>
        <dbReference type="HAMAP-Rule" id="MF_00021"/>
    </source>
</evidence>
<name>THII_STRSV</name>
<reference key="1">
    <citation type="journal article" date="2007" name="J. Bacteriol.">
        <title>Genome of the opportunistic pathogen Streptococcus sanguinis.</title>
        <authorList>
            <person name="Xu P."/>
            <person name="Alves J.M."/>
            <person name="Kitten T."/>
            <person name="Brown A."/>
            <person name="Chen Z."/>
            <person name="Ozaki L.S."/>
            <person name="Manque P."/>
            <person name="Ge X."/>
            <person name="Serrano M.G."/>
            <person name="Puiu D."/>
            <person name="Hendricks S."/>
            <person name="Wang Y."/>
            <person name="Chaplin M.D."/>
            <person name="Akan D."/>
            <person name="Paik S."/>
            <person name="Peterson D.L."/>
            <person name="Macrina F.L."/>
            <person name="Buck G.A."/>
        </authorList>
    </citation>
    <scope>NUCLEOTIDE SEQUENCE [LARGE SCALE GENOMIC DNA]</scope>
    <source>
        <strain>SK36</strain>
    </source>
</reference>
<sequence length="404" mass="45303">MQYSEIMVRYGELSTKGKNRMRFINKLKRNIQAVLSVYPKVHVKADRDRTHVYLHGTDYQPVAESLKQIFGIQNFSPSYKIEKSVPALIEAVQSIMKEVYQEGMTFKITSKRSDHSFELDSRELNQTLGDAVFEAIPNVQVKMKAPDIELRVEIREEAAYISYETIRGAGGLPVGTSGKGMLMLSGGIDSPVAGYLALKRGVDIEAVHFASPPYTSPGALKKAQDLTRKLTKFGGNIQFIEVPFTEIQEEIKAKAPEAYLMTLTRRFMMRITDRIREERSAQVIINGESLGQVASQTIESMQAINAVTNTPVIRPVVTMDKLEIIDIAEKIDTFQISIQPFEDCCTIFAPDRPKTNPKIKNAEKYETYLDVEGLVERAVAGIMITEITPQAETDEVDELIEGLL</sequence>
<comment type="function">
    <text evidence="1">Catalyzes the ATP-dependent transfer of a sulfur to tRNA to produce 4-thiouridine in position 8 of tRNAs, which functions as a near-UV photosensor. Also catalyzes the transfer of sulfur to the sulfur carrier protein ThiS, forming ThiS-thiocarboxylate. This is a step in the synthesis of thiazole, in the thiamine biosynthesis pathway. The sulfur is donated as persulfide by IscS.</text>
</comment>
<comment type="catalytic activity">
    <reaction evidence="1">
        <text>[ThiI sulfur-carrier protein]-S-sulfanyl-L-cysteine + a uridine in tRNA + 2 reduced [2Fe-2S]-[ferredoxin] + ATP + H(+) = [ThiI sulfur-carrier protein]-L-cysteine + a 4-thiouridine in tRNA + 2 oxidized [2Fe-2S]-[ferredoxin] + AMP + diphosphate</text>
        <dbReference type="Rhea" id="RHEA:24176"/>
        <dbReference type="Rhea" id="RHEA-COMP:10000"/>
        <dbReference type="Rhea" id="RHEA-COMP:10001"/>
        <dbReference type="Rhea" id="RHEA-COMP:13337"/>
        <dbReference type="Rhea" id="RHEA-COMP:13338"/>
        <dbReference type="Rhea" id="RHEA-COMP:13339"/>
        <dbReference type="Rhea" id="RHEA-COMP:13340"/>
        <dbReference type="ChEBI" id="CHEBI:15378"/>
        <dbReference type="ChEBI" id="CHEBI:29950"/>
        <dbReference type="ChEBI" id="CHEBI:30616"/>
        <dbReference type="ChEBI" id="CHEBI:33019"/>
        <dbReference type="ChEBI" id="CHEBI:33737"/>
        <dbReference type="ChEBI" id="CHEBI:33738"/>
        <dbReference type="ChEBI" id="CHEBI:61963"/>
        <dbReference type="ChEBI" id="CHEBI:65315"/>
        <dbReference type="ChEBI" id="CHEBI:136798"/>
        <dbReference type="ChEBI" id="CHEBI:456215"/>
        <dbReference type="EC" id="2.8.1.4"/>
    </reaction>
</comment>
<comment type="catalytic activity">
    <reaction evidence="1">
        <text>[ThiS sulfur-carrier protein]-C-terminal Gly-Gly-AMP + S-sulfanyl-L-cysteinyl-[cysteine desulfurase] + AH2 = [ThiS sulfur-carrier protein]-C-terminal-Gly-aminoethanethioate + L-cysteinyl-[cysteine desulfurase] + A + AMP + 2 H(+)</text>
        <dbReference type="Rhea" id="RHEA:43340"/>
        <dbReference type="Rhea" id="RHEA-COMP:12157"/>
        <dbReference type="Rhea" id="RHEA-COMP:12158"/>
        <dbReference type="Rhea" id="RHEA-COMP:12910"/>
        <dbReference type="Rhea" id="RHEA-COMP:19908"/>
        <dbReference type="ChEBI" id="CHEBI:13193"/>
        <dbReference type="ChEBI" id="CHEBI:15378"/>
        <dbReference type="ChEBI" id="CHEBI:17499"/>
        <dbReference type="ChEBI" id="CHEBI:29950"/>
        <dbReference type="ChEBI" id="CHEBI:61963"/>
        <dbReference type="ChEBI" id="CHEBI:90618"/>
        <dbReference type="ChEBI" id="CHEBI:232372"/>
        <dbReference type="ChEBI" id="CHEBI:456215"/>
    </reaction>
</comment>
<comment type="pathway">
    <text evidence="1">Cofactor biosynthesis; thiamine diphosphate biosynthesis.</text>
</comment>
<comment type="subcellular location">
    <subcellularLocation>
        <location evidence="1">Cytoplasm</location>
    </subcellularLocation>
</comment>
<comment type="similarity">
    <text evidence="1">Belongs to the ThiI family.</text>
</comment>
<protein>
    <recommendedName>
        <fullName evidence="1">Probable tRNA sulfurtransferase</fullName>
        <ecNumber evidence="1">2.8.1.4</ecNumber>
    </recommendedName>
    <alternativeName>
        <fullName evidence="1">Sulfur carrier protein ThiS sulfurtransferase</fullName>
    </alternativeName>
    <alternativeName>
        <fullName evidence="1">Thiamine biosynthesis protein ThiI</fullName>
    </alternativeName>
    <alternativeName>
        <fullName evidence="1">tRNA 4-thiouridine synthase</fullName>
    </alternativeName>
</protein>
<feature type="chain" id="PRO_1000074302" description="Probable tRNA sulfurtransferase">
    <location>
        <begin position="1"/>
        <end position="404"/>
    </location>
</feature>
<feature type="domain" description="THUMP" evidence="1">
    <location>
        <begin position="60"/>
        <end position="165"/>
    </location>
</feature>
<feature type="binding site" evidence="1">
    <location>
        <begin position="183"/>
        <end position="184"/>
    </location>
    <ligand>
        <name>ATP</name>
        <dbReference type="ChEBI" id="CHEBI:30616"/>
    </ligand>
</feature>
<feature type="binding site" evidence="1">
    <location>
        <begin position="208"/>
        <end position="209"/>
    </location>
    <ligand>
        <name>ATP</name>
        <dbReference type="ChEBI" id="CHEBI:30616"/>
    </ligand>
</feature>
<feature type="binding site" evidence="1">
    <location>
        <position position="265"/>
    </location>
    <ligand>
        <name>ATP</name>
        <dbReference type="ChEBI" id="CHEBI:30616"/>
    </ligand>
</feature>
<feature type="binding site" evidence="1">
    <location>
        <position position="287"/>
    </location>
    <ligand>
        <name>ATP</name>
        <dbReference type="ChEBI" id="CHEBI:30616"/>
    </ligand>
</feature>
<feature type="binding site" evidence="1">
    <location>
        <position position="296"/>
    </location>
    <ligand>
        <name>ATP</name>
        <dbReference type="ChEBI" id="CHEBI:30616"/>
    </ligand>
</feature>
<proteinExistence type="inferred from homology"/>
<gene>
    <name evidence="1" type="primary">thiI</name>
    <name type="ordered locus">SSA_1058</name>
</gene>
<dbReference type="EC" id="2.8.1.4" evidence="1"/>
<dbReference type="EMBL" id="CP000387">
    <property type="protein sequence ID" value="ABN44472.1"/>
    <property type="molecule type" value="Genomic_DNA"/>
</dbReference>
<dbReference type="RefSeq" id="WP_011836896.1">
    <property type="nucleotide sequence ID" value="NC_009009.1"/>
</dbReference>
<dbReference type="RefSeq" id="YP_001035022.1">
    <property type="nucleotide sequence ID" value="NC_009009.1"/>
</dbReference>
<dbReference type="SMR" id="A3CMR7"/>
<dbReference type="STRING" id="388919.SSA_1058"/>
<dbReference type="KEGG" id="ssa:SSA_1058"/>
<dbReference type="PATRIC" id="fig|388919.9.peg.1004"/>
<dbReference type="eggNOG" id="COG0301">
    <property type="taxonomic scope" value="Bacteria"/>
</dbReference>
<dbReference type="HOGENOM" id="CLU_037952_4_0_9"/>
<dbReference type="OrthoDB" id="9773948at2"/>
<dbReference type="UniPathway" id="UPA00060"/>
<dbReference type="Proteomes" id="UP000002148">
    <property type="component" value="Chromosome"/>
</dbReference>
<dbReference type="GO" id="GO:0005829">
    <property type="term" value="C:cytosol"/>
    <property type="evidence" value="ECO:0007669"/>
    <property type="project" value="TreeGrafter"/>
</dbReference>
<dbReference type="GO" id="GO:0005524">
    <property type="term" value="F:ATP binding"/>
    <property type="evidence" value="ECO:0007669"/>
    <property type="project" value="UniProtKB-UniRule"/>
</dbReference>
<dbReference type="GO" id="GO:0004810">
    <property type="term" value="F:CCA tRNA nucleotidyltransferase activity"/>
    <property type="evidence" value="ECO:0007669"/>
    <property type="project" value="InterPro"/>
</dbReference>
<dbReference type="GO" id="GO:0000049">
    <property type="term" value="F:tRNA binding"/>
    <property type="evidence" value="ECO:0007669"/>
    <property type="project" value="UniProtKB-UniRule"/>
</dbReference>
<dbReference type="GO" id="GO:0140741">
    <property type="term" value="F:tRNA-uracil-4 sulfurtransferase activity"/>
    <property type="evidence" value="ECO:0007669"/>
    <property type="project" value="UniProtKB-EC"/>
</dbReference>
<dbReference type="GO" id="GO:0009228">
    <property type="term" value="P:thiamine biosynthetic process"/>
    <property type="evidence" value="ECO:0007669"/>
    <property type="project" value="UniProtKB-KW"/>
</dbReference>
<dbReference type="GO" id="GO:0009229">
    <property type="term" value="P:thiamine diphosphate biosynthetic process"/>
    <property type="evidence" value="ECO:0007669"/>
    <property type="project" value="UniProtKB-UniRule"/>
</dbReference>
<dbReference type="GO" id="GO:0052837">
    <property type="term" value="P:thiazole biosynthetic process"/>
    <property type="evidence" value="ECO:0007669"/>
    <property type="project" value="TreeGrafter"/>
</dbReference>
<dbReference type="GO" id="GO:0002937">
    <property type="term" value="P:tRNA 4-thiouridine biosynthesis"/>
    <property type="evidence" value="ECO:0007669"/>
    <property type="project" value="TreeGrafter"/>
</dbReference>
<dbReference type="CDD" id="cd01712">
    <property type="entry name" value="PPase_ThiI"/>
    <property type="match status" value="1"/>
</dbReference>
<dbReference type="CDD" id="cd11716">
    <property type="entry name" value="THUMP_ThiI"/>
    <property type="match status" value="1"/>
</dbReference>
<dbReference type="FunFam" id="3.40.50.620:FF:000053">
    <property type="entry name" value="Probable tRNA sulfurtransferase"/>
    <property type="match status" value="1"/>
</dbReference>
<dbReference type="Gene3D" id="3.30.2130.30">
    <property type="match status" value="1"/>
</dbReference>
<dbReference type="Gene3D" id="3.40.50.620">
    <property type="entry name" value="HUPs"/>
    <property type="match status" value="1"/>
</dbReference>
<dbReference type="HAMAP" id="MF_00021">
    <property type="entry name" value="ThiI"/>
    <property type="match status" value="1"/>
</dbReference>
<dbReference type="InterPro" id="IPR014729">
    <property type="entry name" value="Rossmann-like_a/b/a_fold"/>
</dbReference>
<dbReference type="InterPro" id="IPR020536">
    <property type="entry name" value="ThiI_AANH"/>
</dbReference>
<dbReference type="InterPro" id="IPR054173">
    <property type="entry name" value="ThiI_fer"/>
</dbReference>
<dbReference type="InterPro" id="IPR049961">
    <property type="entry name" value="ThiI_N"/>
</dbReference>
<dbReference type="InterPro" id="IPR004114">
    <property type="entry name" value="THUMP_dom"/>
</dbReference>
<dbReference type="InterPro" id="IPR049962">
    <property type="entry name" value="THUMP_ThiI"/>
</dbReference>
<dbReference type="InterPro" id="IPR003720">
    <property type="entry name" value="tRNA_STrfase"/>
</dbReference>
<dbReference type="InterPro" id="IPR050102">
    <property type="entry name" value="tRNA_sulfurtransferase_ThiI"/>
</dbReference>
<dbReference type="NCBIfam" id="TIGR00342">
    <property type="entry name" value="tRNA uracil 4-sulfurtransferase ThiI"/>
    <property type="match status" value="1"/>
</dbReference>
<dbReference type="PANTHER" id="PTHR43209">
    <property type="entry name" value="TRNA SULFURTRANSFERASE"/>
    <property type="match status" value="1"/>
</dbReference>
<dbReference type="PANTHER" id="PTHR43209:SF1">
    <property type="entry name" value="TRNA SULFURTRANSFERASE"/>
    <property type="match status" value="1"/>
</dbReference>
<dbReference type="Pfam" id="PF02568">
    <property type="entry name" value="ThiI"/>
    <property type="match status" value="1"/>
</dbReference>
<dbReference type="Pfam" id="PF22025">
    <property type="entry name" value="ThiI_fer"/>
    <property type="match status" value="1"/>
</dbReference>
<dbReference type="Pfam" id="PF02926">
    <property type="entry name" value="THUMP"/>
    <property type="match status" value="1"/>
</dbReference>
<dbReference type="SMART" id="SM00981">
    <property type="entry name" value="THUMP"/>
    <property type="match status" value="1"/>
</dbReference>
<dbReference type="SUPFAM" id="SSF52402">
    <property type="entry name" value="Adenine nucleotide alpha hydrolases-like"/>
    <property type="match status" value="1"/>
</dbReference>
<dbReference type="SUPFAM" id="SSF143437">
    <property type="entry name" value="THUMP domain-like"/>
    <property type="match status" value="1"/>
</dbReference>
<dbReference type="PROSITE" id="PS51165">
    <property type="entry name" value="THUMP"/>
    <property type="match status" value="1"/>
</dbReference>
<accession>A3CMR7</accession>